<gene>
    <name evidence="1" type="primary">rpsR</name>
    <name type="ordered locus">DvMF_1351</name>
</gene>
<organism>
    <name type="scientific">Nitratidesulfovibrio vulgaris (strain DSM 19637 / Miyazaki F)</name>
    <name type="common">Desulfovibrio vulgaris</name>
    <dbReference type="NCBI Taxonomy" id="883"/>
    <lineage>
        <taxon>Bacteria</taxon>
        <taxon>Pseudomonadati</taxon>
        <taxon>Thermodesulfobacteriota</taxon>
        <taxon>Desulfovibrionia</taxon>
        <taxon>Desulfovibrionales</taxon>
        <taxon>Desulfovibrionaceae</taxon>
        <taxon>Nitratidesulfovibrio</taxon>
    </lineage>
</organism>
<accession>B8DRL3</accession>
<dbReference type="EMBL" id="CP001197">
    <property type="protein sequence ID" value="ACL08300.1"/>
    <property type="molecule type" value="Genomic_DNA"/>
</dbReference>
<dbReference type="SMR" id="B8DRL3"/>
<dbReference type="STRING" id="883.DvMF_1351"/>
<dbReference type="KEGG" id="dvm:DvMF_1351"/>
<dbReference type="eggNOG" id="COG0238">
    <property type="taxonomic scope" value="Bacteria"/>
</dbReference>
<dbReference type="HOGENOM" id="CLU_148710_2_2_7"/>
<dbReference type="OrthoDB" id="9812008at2"/>
<dbReference type="GO" id="GO:0022627">
    <property type="term" value="C:cytosolic small ribosomal subunit"/>
    <property type="evidence" value="ECO:0007669"/>
    <property type="project" value="TreeGrafter"/>
</dbReference>
<dbReference type="GO" id="GO:0070181">
    <property type="term" value="F:small ribosomal subunit rRNA binding"/>
    <property type="evidence" value="ECO:0007669"/>
    <property type="project" value="TreeGrafter"/>
</dbReference>
<dbReference type="GO" id="GO:0003735">
    <property type="term" value="F:structural constituent of ribosome"/>
    <property type="evidence" value="ECO:0007669"/>
    <property type="project" value="InterPro"/>
</dbReference>
<dbReference type="GO" id="GO:0006412">
    <property type="term" value="P:translation"/>
    <property type="evidence" value="ECO:0007669"/>
    <property type="project" value="UniProtKB-UniRule"/>
</dbReference>
<dbReference type="Gene3D" id="4.10.640.10">
    <property type="entry name" value="Ribosomal protein S18"/>
    <property type="match status" value="1"/>
</dbReference>
<dbReference type="HAMAP" id="MF_00270">
    <property type="entry name" value="Ribosomal_bS18"/>
    <property type="match status" value="1"/>
</dbReference>
<dbReference type="InterPro" id="IPR001648">
    <property type="entry name" value="Ribosomal_bS18"/>
</dbReference>
<dbReference type="InterPro" id="IPR036870">
    <property type="entry name" value="Ribosomal_bS18_sf"/>
</dbReference>
<dbReference type="NCBIfam" id="TIGR00165">
    <property type="entry name" value="S18"/>
    <property type="match status" value="1"/>
</dbReference>
<dbReference type="PANTHER" id="PTHR13479">
    <property type="entry name" value="30S RIBOSOMAL PROTEIN S18"/>
    <property type="match status" value="1"/>
</dbReference>
<dbReference type="PANTHER" id="PTHR13479:SF40">
    <property type="entry name" value="SMALL RIBOSOMAL SUBUNIT PROTEIN BS18M"/>
    <property type="match status" value="1"/>
</dbReference>
<dbReference type="Pfam" id="PF01084">
    <property type="entry name" value="Ribosomal_S18"/>
    <property type="match status" value="1"/>
</dbReference>
<dbReference type="PRINTS" id="PR00974">
    <property type="entry name" value="RIBOSOMALS18"/>
</dbReference>
<dbReference type="SUPFAM" id="SSF46911">
    <property type="entry name" value="Ribosomal protein S18"/>
    <property type="match status" value="1"/>
</dbReference>
<proteinExistence type="inferred from homology"/>
<name>RS18_NITV9</name>
<protein>
    <recommendedName>
        <fullName evidence="1">Small ribosomal subunit protein bS18</fullName>
    </recommendedName>
    <alternativeName>
        <fullName evidence="2">30S ribosomal protein S18</fullName>
    </alternativeName>
</protein>
<sequence>MAFKKKFTPRRKFCRFCADKDLPLDYKRADILRDFITERGKIIARRITGTCAHHQRLLTREIKRARQMALLFYTAGHSSDVKKKSQI</sequence>
<keyword id="KW-0687">Ribonucleoprotein</keyword>
<keyword id="KW-0689">Ribosomal protein</keyword>
<keyword id="KW-0694">RNA-binding</keyword>
<keyword id="KW-0699">rRNA-binding</keyword>
<reference key="1">
    <citation type="submission" date="2008-10" db="EMBL/GenBank/DDBJ databases">
        <title>Complete sequence of Desulfovibrio vulgaris str. 'Miyazaki F'.</title>
        <authorList>
            <person name="Lucas S."/>
            <person name="Copeland A."/>
            <person name="Lapidus A."/>
            <person name="Glavina del Rio T."/>
            <person name="Dalin E."/>
            <person name="Tice H."/>
            <person name="Bruce D."/>
            <person name="Goodwin L."/>
            <person name="Pitluck S."/>
            <person name="Sims D."/>
            <person name="Brettin T."/>
            <person name="Detter J.C."/>
            <person name="Han C."/>
            <person name="Larimer F."/>
            <person name="Land M."/>
            <person name="Hauser L."/>
            <person name="Kyrpides N."/>
            <person name="Mikhailova N."/>
            <person name="Hazen T.C."/>
            <person name="Richardson P."/>
        </authorList>
    </citation>
    <scope>NUCLEOTIDE SEQUENCE [LARGE SCALE GENOMIC DNA]</scope>
    <source>
        <strain>DSM 19637 / Miyazaki F</strain>
    </source>
</reference>
<feature type="chain" id="PRO_1000119275" description="Small ribosomal subunit protein bS18">
    <location>
        <begin position="1"/>
        <end position="87"/>
    </location>
</feature>
<comment type="function">
    <text evidence="1">Binds as a heterodimer with protein bS6 to the central domain of the 16S rRNA, where it helps stabilize the platform of the 30S subunit.</text>
</comment>
<comment type="subunit">
    <text evidence="1">Part of the 30S ribosomal subunit. Forms a tight heterodimer with protein bS6.</text>
</comment>
<comment type="similarity">
    <text evidence="1">Belongs to the bacterial ribosomal protein bS18 family.</text>
</comment>
<evidence type="ECO:0000255" key="1">
    <source>
        <dbReference type="HAMAP-Rule" id="MF_00270"/>
    </source>
</evidence>
<evidence type="ECO:0000305" key="2"/>